<feature type="chain" id="PRO_1000093211" description="Phosphomethylpyrimidine synthase">
    <location>
        <begin position="1"/>
        <end position="476"/>
    </location>
</feature>
<feature type="region of interest" description="Disordered" evidence="2">
    <location>
        <begin position="1"/>
        <end position="27"/>
    </location>
</feature>
<feature type="region of interest" description="Disordered" evidence="2">
    <location>
        <begin position="425"/>
        <end position="476"/>
    </location>
</feature>
<feature type="compositionally biased region" description="Basic and acidic residues" evidence="2">
    <location>
        <begin position="7"/>
        <end position="27"/>
    </location>
</feature>
<feature type="compositionally biased region" description="Low complexity" evidence="2">
    <location>
        <begin position="436"/>
        <end position="447"/>
    </location>
</feature>
<feature type="binding site" evidence="1">
    <location>
        <position position="67"/>
    </location>
    <ligand>
        <name>substrate</name>
    </ligand>
</feature>
<feature type="binding site" evidence="1">
    <location>
        <position position="96"/>
    </location>
    <ligand>
        <name>substrate</name>
    </ligand>
</feature>
<feature type="binding site" evidence="1">
    <location>
        <position position="125"/>
    </location>
    <ligand>
        <name>substrate</name>
    </ligand>
</feature>
<feature type="binding site" evidence="1">
    <location>
        <position position="160"/>
    </location>
    <ligand>
        <name>substrate</name>
    </ligand>
</feature>
<feature type="binding site" evidence="1">
    <location>
        <begin position="180"/>
        <end position="182"/>
    </location>
    <ligand>
        <name>substrate</name>
    </ligand>
</feature>
<feature type="binding site" evidence="1">
    <location>
        <begin position="221"/>
        <end position="224"/>
    </location>
    <ligand>
        <name>substrate</name>
    </ligand>
</feature>
<feature type="binding site" evidence="1">
    <location>
        <position position="260"/>
    </location>
    <ligand>
        <name>substrate</name>
    </ligand>
</feature>
<feature type="binding site" evidence="1">
    <location>
        <position position="264"/>
    </location>
    <ligand>
        <name>Zn(2+)</name>
        <dbReference type="ChEBI" id="CHEBI:29105"/>
    </ligand>
</feature>
<feature type="binding site" evidence="1">
    <location>
        <position position="287"/>
    </location>
    <ligand>
        <name>substrate</name>
    </ligand>
</feature>
<feature type="binding site" evidence="1">
    <location>
        <position position="328"/>
    </location>
    <ligand>
        <name>Zn(2+)</name>
        <dbReference type="ChEBI" id="CHEBI:29105"/>
    </ligand>
</feature>
<feature type="binding site" evidence="1">
    <location>
        <position position="408"/>
    </location>
    <ligand>
        <name>[4Fe-4S] cluster</name>
        <dbReference type="ChEBI" id="CHEBI:49883"/>
        <note>4Fe-4S-S-AdoMet</note>
    </ligand>
</feature>
<feature type="binding site" evidence="1">
    <location>
        <position position="411"/>
    </location>
    <ligand>
        <name>[4Fe-4S] cluster</name>
        <dbReference type="ChEBI" id="CHEBI:49883"/>
        <note>4Fe-4S-S-AdoMet</note>
    </ligand>
</feature>
<feature type="binding site" evidence="1">
    <location>
        <position position="416"/>
    </location>
    <ligand>
        <name>[4Fe-4S] cluster</name>
        <dbReference type="ChEBI" id="CHEBI:49883"/>
        <note>4Fe-4S-S-AdoMet</note>
    </ligand>
</feature>
<sequence length="476" mass="51384">MSTQLQHARDGTVTDAMRRVADREGRDPEVVREAVADGHAVIPANHHHDALDPMIIGRDFATKVNANIGNSDTTGDIDDELEKLHTAVHYGADTVMDLSTGENLDGIRTANIDNSPVPVGTVPIYEAVTRVEDVTDITPDLLIDVVEKQAKQGVDYMTLHAGVLAEHLPLTDDRTTGIVSRGGSILSQWMTEHGEQNPLYTHYDELCEILQAHDVTISLGDGLRPGSVADASDDAQFAELDTLGELTRRAWDHGVQAMVEGPGHVPMDQIRANVDRQQEVCDGAPFYVLGPLVTDIAPGYDHITSAIGATEAARAGAAMLCYVTPKEHLGLPDAEDVRDGMAAYRIAAHAGDVAAGKPGARDWDDALSEARYNFDWNRQFDLALDPERAQAFHDQTLPGDNYKDARFCSMCGVDFCSMRIDQDARDAGDDADDMTELTTETDLSESAAAEVNRPPTGTHDAPAAEQAPSPGDDDDD</sequence>
<proteinExistence type="inferred from homology"/>
<name>THIC_HALS3</name>
<accession>B0R400</accession>
<organism>
    <name type="scientific">Halobacterium salinarum (strain ATCC 29341 / DSM 671 / R1)</name>
    <dbReference type="NCBI Taxonomy" id="478009"/>
    <lineage>
        <taxon>Archaea</taxon>
        <taxon>Methanobacteriati</taxon>
        <taxon>Methanobacteriota</taxon>
        <taxon>Stenosarchaea group</taxon>
        <taxon>Halobacteria</taxon>
        <taxon>Halobacteriales</taxon>
        <taxon>Halobacteriaceae</taxon>
        <taxon>Halobacterium</taxon>
        <taxon>Halobacterium salinarum NRC-34001</taxon>
    </lineage>
</organism>
<gene>
    <name evidence="1" type="primary">thiC</name>
    <name type="ordered locus">OE_2057F</name>
</gene>
<dbReference type="EC" id="4.1.99.17" evidence="1"/>
<dbReference type="EMBL" id="AM774415">
    <property type="protein sequence ID" value="CAP13465.1"/>
    <property type="molecule type" value="Genomic_DNA"/>
</dbReference>
<dbReference type="RefSeq" id="WP_010902492.1">
    <property type="nucleotide sequence ID" value="NC_010364.1"/>
</dbReference>
<dbReference type="SMR" id="B0R400"/>
<dbReference type="EnsemblBacteria" id="CAP13465">
    <property type="protein sequence ID" value="CAP13465"/>
    <property type="gene ID" value="OE_2057F"/>
</dbReference>
<dbReference type="GeneID" id="89349164"/>
<dbReference type="KEGG" id="hsl:OE_2057F"/>
<dbReference type="HOGENOM" id="CLU_013181_2_1_2"/>
<dbReference type="PhylomeDB" id="B0R400"/>
<dbReference type="UniPathway" id="UPA00060"/>
<dbReference type="Proteomes" id="UP000001321">
    <property type="component" value="Chromosome"/>
</dbReference>
<dbReference type="GO" id="GO:0051539">
    <property type="term" value="F:4 iron, 4 sulfur cluster binding"/>
    <property type="evidence" value="ECO:0007669"/>
    <property type="project" value="UniProtKB-KW"/>
</dbReference>
<dbReference type="GO" id="GO:0016830">
    <property type="term" value="F:carbon-carbon lyase activity"/>
    <property type="evidence" value="ECO:0007669"/>
    <property type="project" value="InterPro"/>
</dbReference>
<dbReference type="GO" id="GO:0008270">
    <property type="term" value="F:zinc ion binding"/>
    <property type="evidence" value="ECO:0007669"/>
    <property type="project" value="UniProtKB-UniRule"/>
</dbReference>
<dbReference type="GO" id="GO:0009228">
    <property type="term" value="P:thiamine biosynthetic process"/>
    <property type="evidence" value="ECO:0007669"/>
    <property type="project" value="UniProtKB-KW"/>
</dbReference>
<dbReference type="GO" id="GO:0009229">
    <property type="term" value="P:thiamine diphosphate biosynthetic process"/>
    <property type="evidence" value="ECO:0007669"/>
    <property type="project" value="UniProtKB-UniRule"/>
</dbReference>
<dbReference type="FunFam" id="3.20.20.540:FF:000001">
    <property type="entry name" value="Phosphomethylpyrimidine synthase"/>
    <property type="match status" value="1"/>
</dbReference>
<dbReference type="Gene3D" id="6.10.250.620">
    <property type="match status" value="1"/>
</dbReference>
<dbReference type="Gene3D" id="3.20.20.540">
    <property type="entry name" value="Radical SAM ThiC family, central domain"/>
    <property type="match status" value="1"/>
</dbReference>
<dbReference type="HAMAP" id="MF_00089">
    <property type="entry name" value="ThiC"/>
    <property type="match status" value="1"/>
</dbReference>
<dbReference type="InterPro" id="IPR037509">
    <property type="entry name" value="ThiC"/>
</dbReference>
<dbReference type="InterPro" id="IPR038521">
    <property type="entry name" value="ThiC/Bza_core_dom"/>
</dbReference>
<dbReference type="InterPro" id="IPR002817">
    <property type="entry name" value="ThiC/BzaA/B"/>
</dbReference>
<dbReference type="NCBIfam" id="NF006763">
    <property type="entry name" value="PRK09284.1"/>
    <property type="match status" value="1"/>
</dbReference>
<dbReference type="NCBIfam" id="NF009895">
    <property type="entry name" value="PRK13352.1"/>
    <property type="match status" value="1"/>
</dbReference>
<dbReference type="NCBIfam" id="TIGR00190">
    <property type="entry name" value="thiC"/>
    <property type="match status" value="1"/>
</dbReference>
<dbReference type="PANTHER" id="PTHR30557:SF1">
    <property type="entry name" value="PHOSPHOMETHYLPYRIMIDINE SYNTHASE, CHLOROPLASTIC"/>
    <property type="match status" value="1"/>
</dbReference>
<dbReference type="PANTHER" id="PTHR30557">
    <property type="entry name" value="THIAMINE BIOSYNTHESIS PROTEIN THIC"/>
    <property type="match status" value="1"/>
</dbReference>
<dbReference type="Pfam" id="PF01964">
    <property type="entry name" value="ThiC_Rad_SAM"/>
    <property type="match status" value="1"/>
</dbReference>
<dbReference type="SFLD" id="SFLDF00407">
    <property type="entry name" value="phosphomethylpyrimidine_syntha"/>
    <property type="match status" value="1"/>
</dbReference>
<dbReference type="SFLD" id="SFLDG01114">
    <property type="entry name" value="phosphomethylpyrimidine_syntha"/>
    <property type="match status" value="1"/>
</dbReference>
<dbReference type="SFLD" id="SFLDS00113">
    <property type="entry name" value="Radical_SAM_Phosphomethylpyrim"/>
    <property type="match status" value="1"/>
</dbReference>
<keyword id="KW-0004">4Fe-4S</keyword>
<keyword id="KW-0408">Iron</keyword>
<keyword id="KW-0411">Iron-sulfur</keyword>
<keyword id="KW-0456">Lyase</keyword>
<keyword id="KW-0479">Metal-binding</keyword>
<keyword id="KW-0949">S-adenosyl-L-methionine</keyword>
<keyword id="KW-0784">Thiamine biosynthesis</keyword>
<keyword id="KW-0862">Zinc</keyword>
<reference key="1">
    <citation type="journal article" date="2008" name="Genomics">
        <title>Evolution in the laboratory: the genome of Halobacterium salinarum strain R1 compared to that of strain NRC-1.</title>
        <authorList>
            <person name="Pfeiffer F."/>
            <person name="Schuster S.C."/>
            <person name="Broicher A."/>
            <person name="Falb M."/>
            <person name="Palm P."/>
            <person name="Rodewald K."/>
            <person name="Ruepp A."/>
            <person name="Soppa J."/>
            <person name="Tittor J."/>
            <person name="Oesterhelt D."/>
        </authorList>
    </citation>
    <scope>NUCLEOTIDE SEQUENCE [LARGE SCALE GENOMIC DNA]</scope>
    <source>
        <strain>ATCC 29341 / DSM 671 / R1</strain>
    </source>
</reference>
<protein>
    <recommendedName>
        <fullName evidence="1">Phosphomethylpyrimidine synthase</fullName>
        <ecNumber evidence="1">4.1.99.17</ecNumber>
    </recommendedName>
    <alternativeName>
        <fullName evidence="1">Hydroxymethylpyrimidine phosphate synthase</fullName>
        <shortName evidence="1">HMP-P synthase</shortName>
        <shortName evidence="1">HMP-phosphate synthase</shortName>
        <shortName evidence="1">HMPP synthase</shortName>
    </alternativeName>
    <alternativeName>
        <fullName evidence="1">Thiamine biosynthesis protein ThiC</fullName>
    </alternativeName>
</protein>
<comment type="function">
    <text evidence="1">Catalyzes the synthesis of the hydroxymethylpyrimidine phosphate (HMP-P) moiety of thiamine from aminoimidazole ribotide (AIR) in a radical S-adenosyl-L-methionine (SAM)-dependent reaction.</text>
</comment>
<comment type="catalytic activity">
    <reaction evidence="1">
        <text>5-amino-1-(5-phospho-beta-D-ribosyl)imidazole + S-adenosyl-L-methionine = 4-amino-2-methyl-5-(phosphooxymethyl)pyrimidine + CO + 5'-deoxyadenosine + formate + L-methionine + 3 H(+)</text>
        <dbReference type="Rhea" id="RHEA:24840"/>
        <dbReference type="ChEBI" id="CHEBI:15378"/>
        <dbReference type="ChEBI" id="CHEBI:15740"/>
        <dbReference type="ChEBI" id="CHEBI:17245"/>
        <dbReference type="ChEBI" id="CHEBI:17319"/>
        <dbReference type="ChEBI" id="CHEBI:57844"/>
        <dbReference type="ChEBI" id="CHEBI:58354"/>
        <dbReference type="ChEBI" id="CHEBI:59789"/>
        <dbReference type="ChEBI" id="CHEBI:137981"/>
        <dbReference type="EC" id="4.1.99.17"/>
    </reaction>
</comment>
<comment type="cofactor">
    <cofactor evidence="1">
        <name>[4Fe-4S] cluster</name>
        <dbReference type="ChEBI" id="CHEBI:49883"/>
    </cofactor>
    <text evidence="1">Binds 1 [4Fe-4S] cluster per subunit. The cluster is coordinated with 3 cysteines and an exchangeable S-adenosyl-L-methionine.</text>
</comment>
<comment type="pathway">
    <text evidence="1">Cofactor biosynthesis; thiamine diphosphate biosynthesis.</text>
</comment>
<comment type="similarity">
    <text evidence="1">Belongs to the ThiC family.</text>
</comment>
<evidence type="ECO:0000255" key="1">
    <source>
        <dbReference type="HAMAP-Rule" id="MF_00089"/>
    </source>
</evidence>
<evidence type="ECO:0000256" key="2">
    <source>
        <dbReference type="SAM" id="MobiDB-lite"/>
    </source>
</evidence>